<organism>
    <name type="scientific">Acinetobacter baumannii (strain SDF)</name>
    <dbReference type="NCBI Taxonomy" id="509170"/>
    <lineage>
        <taxon>Bacteria</taxon>
        <taxon>Pseudomonadati</taxon>
        <taxon>Pseudomonadota</taxon>
        <taxon>Gammaproteobacteria</taxon>
        <taxon>Moraxellales</taxon>
        <taxon>Moraxellaceae</taxon>
        <taxon>Acinetobacter</taxon>
        <taxon>Acinetobacter calcoaceticus/baumannii complex</taxon>
    </lineage>
</organism>
<gene>
    <name evidence="1" type="primary">minE</name>
    <name type="ordered locus">ABSDF2557</name>
</gene>
<comment type="function">
    <text evidence="1">Prevents the cell division inhibition by proteins MinC and MinD at internal division sites while permitting inhibition at polar sites. This ensures cell division at the proper site by restricting the formation of a division septum at the midpoint of the long axis of the cell.</text>
</comment>
<comment type="similarity">
    <text evidence="1">Belongs to the MinE family.</text>
</comment>
<protein>
    <recommendedName>
        <fullName evidence="1">Cell division topological specificity factor</fullName>
    </recommendedName>
</protein>
<dbReference type="EMBL" id="CU468230">
    <property type="protein sequence ID" value="CAP01867.1"/>
    <property type="molecule type" value="Genomic_DNA"/>
</dbReference>
<dbReference type="KEGG" id="abm:ABSDF2557"/>
<dbReference type="HOGENOM" id="CLU_137929_2_3_6"/>
<dbReference type="Proteomes" id="UP000001741">
    <property type="component" value="Chromosome"/>
</dbReference>
<dbReference type="GO" id="GO:0051301">
    <property type="term" value="P:cell division"/>
    <property type="evidence" value="ECO:0007669"/>
    <property type="project" value="UniProtKB-KW"/>
</dbReference>
<dbReference type="GO" id="GO:0032955">
    <property type="term" value="P:regulation of division septum assembly"/>
    <property type="evidence" value="ECO:0007669"/>
    <property type="project" value="InterPro"/>
</dbReference>
<dbReference type="Gene3D" id="3.30.1070.10">
    <property type="entry name" value="Cell division topological specificity factor MinE"/>
    <property type="match status" value="1"/>
</dbReference>
<dbReference type="HAMAP" id="MF_00262">
    <property type="entry name" value="MinE"/>
    <property type="match status" value="1"/>
</dbReference>
<dbReference type="InterPro" id="IPR005527">
    <property type="entry name" value="MinE"/>
</dbReference>
<dbReference type="InterPro" id="IPR036707">
    <property type="entry name" value="MinE_sf"/>
</dbReference>
<dbReference type="NCBIfam" id="TIGR01215">
    <property type="entry name" value="minE"/>
    <property type="match status" value="1"/>
</dbReference>
<dbReference type="NCBIfam" id="NF001422">
    <property type="entry name" value="PRK00296.1"/>
    <property type="match status" value="1"/>
</dbReference>
<dbReference type="Pfam" id="PF03776">
    <property type="entry name" value="MinE"/>
    <property type="match status" value="1"/>
</dbReference>
<dbReference type="SUPFAM" id="SSF55229">
    <property type="entry name" value="Cell division protein MinE topological specificity domain"/>
    <property type="match status" value="1"/>
</dbReference>
<sequence>MAGFWSKLFSSEEKPSSAQTAKDRLKVIVASEQGLGRRLSQDKIDQMKKEIMQVVSRYVSGVGEQHIQMQVRSEANIEMLEMNINLPEER</sequence>
<evidence type="ECO:0000255" key="1">
    <source>
        <dbReference type="HAMAP-Rule" id="MF_00262"/>
    </source>
</evidence>
<evidence type="ECO:0000256" key="2">
    <source>
        <dbReference type="SAM" id="MobiDB-lite"/>
    </source>
</evidence>
<reference key="1">
    <citation type="journal article" date="2008" name="PLoS ONE">
        <title>Comparative analysis of Acinetobacters: three genomes for three lifestyles.</title>
        <authorList>
            <person name="Vallenet D."/>
            <person name="Nordmann P."/>
            <person name="Barbe V."/>
            <person name="Poirel L."/>
            <person name="Mangenot S."/>
            <person name="Bataille E."/>
            <person name="Dossat C."/>
            <person name="Gas S."/>
            <person name="Kreimeyer A."/>
            <person name="Lenoble P."/>
            <person name="Oztas S."/>
            <person name="Poulain J."/>
            <person name="Segurens B."/>
            <person name="Robert C."/>
            <person name="Abergel C."/>
            <person name="Claverie J.-M."/>
            <person name="Raoult D."/>
            <person name="Medigue C."/>
            <person name="Weissenbach J."/>
            <person name="Cruveiller S."/>
        </authorList>
    </citation>
    <scope>NUCLEOTIDE SEQUENCE [LARGE SCALE GENOMIC DNA]</scope>
    <source>
        <strain>SDF</strain>
    </source>
</reference>
<keyword id="KW-0131">Cell cycle</keyword>
<keyword id="KW-0132">Cell division</keyword>
<proteinExistence type="inferred from homology"/>
<accession>B0VTF2</accession>
<name>MINE_ACIBS</name>
<feature type="chain" id="PRO_1000114196" description="Cell division topological specificity factor">
    <location>
        <begin position="1"/>
        <end position="90"/>
    </location>
</feature>
<feature type="region of interest" description="Disordered" evidence="2">
    <location>
        <begin position="1"/>
        <end position="21"/>
    </location>
</feature>
<feature type="compositionally biased region" description="Basic and acidic residues" evidence="2">
    <location>
        <begin position="10"/>
        <end position="21"/>
    </location>
</feature>